<reference key="1">
    <citation type="journal article" date="1996" name="Science">
        <title>Complete genome sequence of the methanogenic archaeon, Methanococcus jannaschii.</title>
        <authorList>
            <person name="Bult C.J."/>
            <person name="White O."/>
            <person name="Olsen G.J."/>
            <person name="Zhou L."/>
            <person name="Fleischmann R.D."/>
            <person name="Sutton G.G."/>
            <person name="Blake J.A."/>
            <person name="FitzGerald L.M."/>
            <person name="Clayton R.A."/>
            <person name="Gocayne J.D."/>
            <person name="Kerlavage A.R."/>
            <person name="Dougherty B.A."/>
            <person name="Tomb J.-F."/>
            <person name="Adams M.D."/>
            <person name="Reich C.I."/>
            <person name="Overbeek R."/>
            <person name="Kirkness E.F."/>
            <person name="Weinstock K.G."/>
            <person name="Merrick J.M."/>
            <person name="Glodek A."/>
            <person name="Scott J.L."/>
            <person name="Geoghagen N.S.M."/>
            <person name="Weidman J.F."/>
            <person name="Fuhrmann J.L."/>
            <person name="Nguyen D."/>
            <person name="Utterback T.R."/>
            <person name="Kelley J.M."/>
            <person name="Peterson J.D."/>
            <person name="Sadow P.W."/>
            <person name="Hanna M.C."/>
            <person name="Cotton M.D."/>
            <person name="Roberts K.M."/>
            <person name="Hurst M.A."/>
            <person name="Kaine B.P."/>
            <person name="Borodovsky M."/>
            <person name="Klenk H.-P."/>
            <person name="Fraser C.M."/>
            <person name="Smith H.O."/>
            <person name="Woese C.R."/>
            <person name="Venter J.C."/>
        </authorList>
    </citation>
    <scope>NUCLEOTIDE SEQUENCE [LARGE SCALE GENOMIC DNA]</scope>
    <source>
        <strain>ATCC 43067 / DSM 2661 / JAL-1 / JCM 10045 / NBRC 100440</strain>
    </source>
</reference>
<proteinExistence type="predicted"/>
<feature type="chain" id="PRO_0000106856" description="Uncharacterized protein MJ0405">
    <location>
        <begin position="1"/>
        <end position="131"/>
    </location>
</feature>
<feature type="transmembrane region" description="Helical" evidence="1">
    <location>
        <begin position="68"/>
        <end position="88"/>
    </location>
</feature>
<feature type="transmembrane region" description="Helical" evidence="1">
    <location>
        <begin position="94"/>
        <end position="114"/>
    </location>
</feature>
<keyword id="KW-1003">Cell membrane</keyword>
<keyword id="KW-0472">Membrane</keyword>
<keyword id="KW-1185">Reference proteome</keyword>
<keyword id="KW-0812">Transmembrane</keyword>
<keyword id="KW-1133">Transmembrane helix</keyword>
<gene>
    <name type="ordered locus">MJ0405</name>
</gene>
<evidence type="ECO:0000255" key="1"/>
<evidence type="ECO:0000305" key="2"/>
<comment type="subcellular location">
    <subcellularLocation>
        <location evidence="2">Cell membrane</location>
        <topology evidence="2">Multi-pass membrane protein</topology>
    </subcellularLocation>
</comment>
<organism>
    <name type="scientific">Methanocaldococcus jannaschii (strain ATCC 43067 / DSM 2661 / JAL-1 / JCM 10045 / NBRC 100440)</name>
    <name type="common">Methanococcus jannaschii</name>
    <dbReference type="NCBI Taxonomy" id="243232"/>
    <lineage>
        <taxon>Archaea</taxon>
        <taxon>Methanobacteriati</taxon>
        <taxon>Methanobacteriota</taxon>
        <taxon>Methanomada group</taxon>
        <taxon>Methanococci</taxon>
        <taxon>Methanococcales</taxon>
        <taxon>Methanocaldococcaceae</taxon>
        <taxon>Methanocaldococcus</taxon>
    </lineage>
</organism>
<protein>
    <recommendedName>
        <fullName>Uncharacterized protein MJ0405</fullName>
    </recommendedName>
</protein>
<name>Y405_METJA</name>
<sequence>MKIMITISENSEAKELMPIAQAVHILVNKLPVAMRSKNKPGVRLEKGEVVDTNYEGYVLKVAIEKGEVVRATPIIGPYAGLPVIVAPIKDGDNVLGAIGVVDITAGIFEDIVAISRRPELYKFLPEDAFPK</sequence>
<dbReference type="EMBL" id="L77117">
    <property type="protein sequence ID" value="AAB98392.1"/>
    <property type="molecule type" value="Genomic_DNA"/>
</dbReference>
<dbReference type="PIR" id="E64350">
    <property type="entry name" value="E64350"/>
</dbReference>
<dbReference type="FunCoup" id="Q57848">
    <property type="interactions" value="3"/>
</dbReference>
<dbReference type="STRING" id="243232.MJ_0405"/>
<dbReference type="PaxDb" id="243232-MJ_0405"/>
<dbReference type="EnsemblBacteria" id="AAB98392">
    <property type="protein sequence ID" value="AAB98392"/>
    <property type="gene ID" value="MJ_0405"/>
</dbReference>
<dbReference type="KEGG" id="mja:MJ_0405"/>
<dbReference type="eggNOG" id="arCOG04902">
    <property type="taxonomic scope" value="Archaea"/>
</dbReference>
<dbReference type="HOGENOM" id="CLU_147797_0_0_2"/>
<dbReference type="InParanoid" id="Q57848"/>
<dbReference type="PhylomeDB" id="Q57848"/>
<dbReference type="Proteomes" id="UP000000805">
    <property type="component" value="Chromosome"/>
</dbReference>
<dbReference type="GO" id="GO:0005886">
    <property type="term" value="C:plasma membrane"/>
    <property type="evidence" value="ECO:0007669"/>
    <property type="project" value="UniProtKB-SubCell"/>
</dbReference>
<dbReference type="InterPro" id="IPR012029">
    <property type="entry name" value="UCP006557"/>
</dbReference>
<dbReference type="Pfam" id="PF09884">
    <property type="entry name" value="DUF2111"/>
    <property type="match status" value="1"/>
</dbReference>
<dbReference type="PIRSF" id="PIRSF006557">
    <property type="entry name" value="UCP006557_sign"/>
    <property type="match status" value="1"/>
</dbReference>
<accession>Q57848</accession>